<accession>A4SCL4</accession>
<dbReference type="EC" id="2.3.1.180" evidence="1"/>
<dbReference type="EMBL" id="CP000607">
    <property type="protein sequence ID" value="ABP36223.1"/>
    <property type="molecule type" value="Genomic_DNA"/>
</dbReference>
<dbReference type="SMR" id="A4SCL4"/>
<dbReference type="STRING" id="290318.Cvib_0200"/>
<dbReference type="KEGG" id="pvi:Cvib_0200"/>
<dbReference type="eggNOG" id="COG0332">
    <property type="taxonomic scope" value="Bacteria"/>
</dbReference>
<dbReference type="HOGENOM" id="CLU_039592_3_1_10"/>
<dbReference type="OrthoDB" id="9815506at2"/>
<dbReference type="UniPathway" id="UPA00094"/>
<dbReference type="GO" id="GO:0005737">
    <property type="term" value="C:cytoplasm"/>
    <property type="evidence" value="ECO:0007669"/>
    <property type="project" value="UniProtKB-SubCell"/>
</dbReference>
<dbReference type="GO" id="GO:0004315">
    <property type="term" value="F:3-oxoacyl-[acyl-carrier-protein] synthase activity"/>
    <property type="evidence" value="ECO:0007669"/>
    <property type="project" value="InterPro"/>
</dbReference>
<dbReference type="GO" id="GO:0033818">
    <property type="term" value="F:beta-ketoacyl-acyl-carrier-protein synthase III activity"/>
    <property type="evidence" value="ECO:0007669"/>
    <property type="project" value="UniProtKB-UniRule"/>
</dbReference>
<dbReference type="GO" id="GO:0006633">
    <property type="term" value="P:fatty acid biosynthetic process"/>
    <property type="evidence" value="ECO:0007669"/>
    <property type="project" value="UniProtKB-UniRule"/>
</dbReference>
<dbReference type="GO" id="GO:0044550">
    <property type="term" value="P:secondary metabolite biosynthetic process"/>
    <property type="evidence" value="ECO:0007669"/>
    <property type="project" value="TreeGrafter"/>
</dbReference>
<dbReference type="CDD" id="cd00830">
    <property type="entry name" value="KAS_III"/>
    <property type="match status" value="1"/>
</dbReference>
<dbReference type="FunFam" id="3.40.47.10:FF:000004">
    <property type="entry name" value="3-oxoacyl-[acyl-carrier-protein] synthase 3"/>
    <property type="match status" value="1"/>
</dbReference>
<dbReference type="Gene3D" id="3.40.47.10">
    <property type="match status" value="1"/>
</dbReference>
<dbReference type="HAMAP" id="MF_01815">
    <property type="entry name" value="FabH"/>
    <property type="match status" value="1"/>
</dbReference>
<dbReference type="InterPro" id="IPR013747">
    <property type="entry name" value="ACP_syn_III_C"/>
</dbReference>
<dbReference type="InterPro" id="IPR013751">
    <property type="entry name" value="ACP_syn_III_N"/>
</dbReference>
<dbReference type="InterPro" id="IPR004655">
    <property type="entry name" value="FabH"/>
</dbReference>
<dbReference type="InterPro" id="IPR016039">
    <property type="entry name" value="Thiolase-like"/>
</dbReference>
<dbReference type="NCBIfam" id="TIGR00747">
    <property type="entry name" value="fabH"/>
    <property type="match status" value="1"/>
</dbReference>
<dbReference type="NCBIfam" id="NF006829">
    <property type="entry name" value="PRK09352.1"/>
    <property type="match status" value="1"/>
</dbReference>
<dbReference type="PANTHER" id="PTHR34069">
    <property type="entry name" value="3-OXOACYL-[ACYL-CARRIER-PROTEIN] SYNTHASE 3"/>
    <property type="match status" value="1"/>
</dbReference>
<dbReference type="PANTHER" id="PTHR34069:SF2">
    <property type="entry name" value="BETA-KETOACYL-[ACYL-CARRIER-PROTEIN] SYNTHASE III"/>
    <property type="match status" value="1"/>
</dbReference>
<dbReference type="Pfam" id="PF08545">
    <property type="entry name" value="ACP_syn_III"/>
    <property type="match status" value="1"/>
</dbReference>
<dbReference type="Pfam" id="PF08541">
    <property type="entry name" value="ACP_syn_III_C"/>
    <property type="match status" value="1"/>
</dbReference>
<dbReference type="SUPFAM" id="SSF53901">
    <property type="entry name" value="Thiolase-like"/>
    <property type="match status" value="1"/>
</dbReference>
<evidence type="ECO:0000255" key="1">
    <source>
        <dbReference type="HAMAP-Rule" id="MF_01815"/>
    </source>
</evidence>
<sequence>MNAAITATAKYLPDGILSNLDLERMLDTNDEWIRTRTGISERRILRDPEKATSYICGEVARQLLEKRGMKAEELDLIIVATMTPDMLFPSTACLVQDIIGAGNAWAFDLNAACSGFLFALNTGSRFIESGAHKKVMVIGADKMSSVIDYTDRSTAILFGDGGGGVILEPATTEGCGVLDNRMYCDGTSGKDHLLMKGGGSLHPATHQTVDDHLHYIYQDGRMVFKSAVTSMANVAVEIMERNGLTAENVSWLVPHQANQRIISATAERMGISSDKFISNVARYGNTTAGTIPICLAELDEENKLHPGSNLVLCSFGAGYTWGGVYVKWQ</sequence>
<proteinExistence type="inferred from homology"/>
<protein>
    <recommendedName>
        <fullName evidence="1">Beta-ketoacyl-[acyl-carrier-protein] synthase III</fullName>
        <shortName evidence="1">Beta-ketoacyl-ACP synthase III</shortName>
        <shortName evidence="1">KAS III</shortName>
        <ecNumber evidence="1">2.3.1.180</ecNumber>
    </recommendedName>
    <alternativeName>
        <fullName evidence="1">3-oxoacyl-[acyl-carrier-protein] synthase 3</fullName>
    </alternativeName>
    <alternativeName>
        <fullName evidence="1">3-oxoacyl-[acyl-carrier-protein] synthase III</fullName>
    </alternativeName>
</protein>
<name>FABH_CHLPM</name>
<feature type="chain" id="PRO_1000088318" description="Beta-ketoacyl-[acyl-carrier-protein] synthase III">
    <location>
        <begin position="1"/>
        <end position="329"/>
    </location>
</feature>
<feature type="region of interest" description="ACP-binding" evidence="1">
    <location>
        <begin position="256"/>
        <end position="260"/>
    </location>
</feature>
<feature type="active site" evidence="1">
    <location>
        <position position="113"/>
    </location>
</feature>
<feature type="active site" evidence="1">
    <location>
        <position position="255"/>
    </location>
</feature>
<feature type="active site" evidence="1">
    <location>
        <position position="285"/>
    </location>
</feature>
<comment type="function">
    <text evidence="1">Catalyzes the condensation reaction of fatty acid synthesis by the addition to an acyl acceptor of two carbons from malonyl-ACP. Catalyzes the first condensation reaction which initiates fatty acid synthesis and may therefore play a role in governing the total rate of fatty acid production. Possesses both acetoacetyl-ACP synthase and acetyl transacylase activities. Its substrate specificity determines the biosynthesis of branched-chain and/or straight-chain of fatty acids.</text>
</comment>
<comment type="catalytic activity">
    <reaction evidence="1">
        <text>malonyl-[ACP] + acetyl-CoA + H(+) = 3-oxobutanoyl-[ACP] + CO2 + CoA</text>
        <dbReference type="Rhea" id="RHEA:12080"/>
        <dbReference type="Rhea" id="RHEA-COMP:9623"/>
        <dbReference type="Rhea" id="RHEA-COMP:9625"/>
        <dbReference type="ChEBI" id="CHEBI:15378"/>
        <dbReference type="ChEBI" id="CHEBI:16526"/>
        <dbReference type="ChEBI" id="CHEBI:57287"/>
        <dbReference type="ChEBI" id="CHEBI:57288"/>
        <dbReference type="ChEBI" id="CHEBI:78449"/>
        <dbReference type="ChEBI" id="CHEBI:78450"/>
        <dbReference type="EC" id="2.3.1.180"/>
    </reaction>
</comment>
<comment type="pathway">
    <text evidence="1">Lipid metabolism; fatty acid biosynthesis.</text>
</comment>
<comment type="subunit">
    <text evidence="1">Homodimer.</text>
</comment>
<comment type="subcellular location">
    <subcellularLocation>
        <location evidence="1">Cytoplasm</location>
    </subcellularLocation>
</comment>
<comment type="domain">
    <text evidence="1">The last Arg residue of the ACP-binding site is essential for the weak association between ACP/AcpP and FabH.</text>
</comment>
<comment type="similarity">
    <text evidence="1">Belongs to the thiolase-like superfamily. FabH family.</text>
</comment>
<keyword id="KW-0012">Acyltransferase</keyword>
<keyword id="KW-0963">Cytoplasm</keyword>
<keyword id="KW-0275">Fatty acid biosynthesis</keyword>
<keyword id="KW-0276">Fatty acid metabolism</keyword>
<keyword id="KW-0444">Lipid biosynthesis</keyword>
<keyword id="KW-0443">Lipid metabolism</keyword>
<keyword id="KW-0511">Multifunctional enzyme</keyword>
<keyword id="KW-0808">Transferase</keyword>
<organism>
    <name type="scientific">Chlorobium phaeovibrioides (strain DSM 265 / 1930)</name>
    <name type="common">Prosthecochloris vibrioformis (strain DSM 265)</name>
    <dbReference type="NCBI Taxonomy" id="290318"/>
    <lineage>
        <taxon>Bacteria</taxon>
        <taxon>Pseudomonadati</taxon>
        <taxon>Chlorobiota</taxon>
        <taxon>Chlorobiia</taxon>
        <taxon>Chlorobiales</taxon>
        <taxon>Chlorobiaceae</taxon>
        <taxon>Chlorobium/Pelodictyon group</taxon>
        <taxon>Chlorobium</taxon>
    </lineage>
</organism>
<gene>
    <name evidence="1" type="primary">fabH</name>
    <name type="ordered locus">Cvib_0200</name>
</gene>
<reference key="1">
    <citation type="submission" date="2007-03" db="EMBL/GenBank/DDBJ databases">
        <title>Complete sequence of Prosthecochloris vibrioformis DSM 265.</title>
        <authorList>
            <consortium name="US DOE Joint Genome Institute"/>
            <person name="Copeland A."/>
            <person name="Lucas S."/>
            <person name="Lapidus A."/>
            <person name="Barry K."/>
            <person name="Detter J.C."/>
            <person name="Glavina del Rio T."/>
            <person name="Hammon N."/>
            <person name="Israni S."/>
            <person name="Pitluck S."/>
            <person name="Schmutz J."/>
            <person name="Larimer F."/>
            <person name="Land M."/>
            <person name="Hauser L."/>
            <person name="Mikhailova N."/>
            <person name="Li T."/>
            <person name="Overmann J."/>
            <person name="Schuster S.C."/>
            <person name="Bryant D.A."/>
            <person name="Richardson P."/>
        </authorList>
    </citation>
    <scope>NUCLEOTIDE SEQUENCE [LARGE SCALE GENOMIC DNA]</scope>
    <source>
        <strain>DSM 265 / 1930</strain>
    </source>
</reference>